<evidence type="ECO:0000255" key="1"/>
<evidence type="ECO:0000305" key="2"/>
<organism>
    <name type="scientific">Caenorhabditis elegans</name>
    <dbReference type="NCBI Taxonomy" id="6239"/>
    <lineage>
        <taxon>Eukaryota</taxon>
        <taxon>Metazoa</taxon>
        <taxon>Ecdysozoa</taxon>
        <taxon>Nematoda</taxon>
        <taxon>Chromadorea</taxon>
        <taxon>Rhabditida</taxon>
        <taxon>Rhabditina</taxon>
        <taxon>Rhabditomorpha</taxon>
        <taxon>Rhabditoidea</taxon>
        <taxon>Rhabditidae</taxon>
        <taxon>Peloderinae</taxon>
        <taxon>Caenorhabditis</taxon>
    </lineage>
</organism>
<protein>
    <recommendedName>
        <fullName>Serpentine receptor class epsilon-32</fullName>
        <shortName>Protein sre-32</shortName>
    </recommendedName>
</protein>
<keyword id="KW-0472">Membrane</keyword>
<keyword id="KW-1185">Reference proteome</keyword>
<keyword id="KW-0812">Transmembrane</keyword>
<keyword id="KW-1133">Transmembrane helix</keyword>
<sequence length="361" mass="42198">MIIKILDPSKNATYLWLPVYFYDEPFQFQILSSIIELVFYISCFHLMTISLYVMLKVQIFHRNLYILYIPMFCVWYGLIAGKLITIAYRLKFVDLDYELGEHIAMWTDDQAKMLHVSSLRGLELLIFGGFVQWHYMYTVVYGILGVAAERAIASVLIENYETNTQLYIPIALTIITQFLAISTSLSVLFHKASVFLSHLPWIISCSLGALAYLFIKIVNENFQKQITNPRRKRLFTISQQFQVKENLRALRLGTRLVFVVFFYVAFVSFGMFALAFDLVSSAYCHFVENFLFLNPYPICFTAMLTIPHWRKHFQNACFTWRLVKSAWTKPKTSTTSVEISTTKKLEAETDLYFRQLNESWI</sequence>
<name>SRE32_CAEEL</name>
<dbReference type="EMBL" id="Z81139">
    <property type="protein sequence ID" value="CAB03483.2"/>
    <property type="molecule type" value="Genomic_DNA"/>
</dbReference>
<dbReference type="EMBL" id="Z81062">
    <property type="protein sequence ID" value="CAB03483.2"/>
    <property type="status" value="JOINED"/>
    <property type="molecule type" value="Genomic_DNA"/>
</dbReference>
<dbReference type="PIR" id="T20960">
    <property type="entry name" value="T20960"/>
</dbReference>
<dbReference type="RefSeq" id="NP_496650.2">
    <property type="nucleotide sequence ID" value="NM_064249.3"/>
</dbReference>
<dbReference type="FunCoup" id="P90837">
    <property type="interactions" value="11"/>
</dbReference>
<dbReference type="PaxDb" id="6239-W05H5.7"/>
<dbReference type="EnsemblMetazoa" id="W05H5.7.1">
    <property type="protein sequence ID" value="W05H5.7.1"/>
    <property type="gene ID" value="WBGene00012288"/>
</dbReference>
<dbReference type="GeneID" id="189227"/>
<dbReference type="KEGG" id="cel:CELE_W05H5.7"/>
<dbReference type="UCSC" id="W05H5.7">
    <property type="organism name" value="c. elegans"/>
</dbReference>
<dbReference type="AGR" id="WB:WBGene00012288"/>
<dbReference type="CTD" id="189227"/>
<dbReference type="WormBase" id="W05H5.7">
    <property type="protein sequence ID" value="CE35634"/>
    <property type="gene ID" value="WBGene00012288"/>
    <property type="gene designation" value="sre-32"/>
</dbReference>
<dbReference type="eggNOG" id="ENOG502TFCH">
    <property type="taxonomic scope" value="Eukaryota"/>
</dbReference>
<dbReference type="GeneTree" id="ENSGT01130000278788"/>
<dbReference type="HOGENOM" id="CLU_063305_1_0_1"/>
<dbReference type="InParanoid" id="P90837"/>
<dbReference type="OMA" id="FVQWHYM"/>
<dbReference type="OrthoDB" id="5849192at2759"/>
<dbReference type="PhylomeDB" id="P90837"/>
<dbReference type="PRO" id="PR:P90837"/>
<dbReference type="Proteomes" id="UP000001940">
    <property type="component" value="Chromosome II"/>
</dbReference>
<dbReference type="GO" id="GO:0016020">
    <property type="term" value="C:membrane"/>
    <property type="evidence" value="ECO:0007669"/>
    <property type="project" value="UniProtKB-SubCell"/>
</dbReference>
<dbReference type="GO" id="GO:0007606">
    <property type="term" value="P:sensory perception of chemical stimulus"/>
    <property type="evidence" value="ECO:0007669"/>
    <property type="project" value="InterPro"/>
</dbReference>
<dbReference type="InterPro" id="IPR004151">
    <property type="entry name" value="7TM_GPCR_serpentine_rcpt_Sre"/>
</dbReference>
<dbReference type="PANTHER" id="PTHR23128">
    <property type="entry name" value="SERPENTINE RECEPTOR, CLASS E (EPSILON)-RELATED"/>
    <property type="match status" value="1"/>
</dbReference>
<dbReference type="PANTHER" id="PTHR23128:SF60">
    <property type="entry name" value="SERPENTINE RECEPTOR, CLASS E (EPSILON)-RELATED"/>
    <property type="match status" value="1"/>
</dbReference>
<dbReference type="Pfam" id="PF03125">
    <property type="entry name" value="Sre"/>
    <property type="match status" value="1"/>
</dbReference>
<accession>P90837</accession>
<accession>P91843</accession>
<comment type="subcellular location">
    <subcellularLocation>
        <location evidence="2">Membrane</location>
        <topology evidence="2">Multi-pass membrane protein</topology>
    </subcellularLocation>
</comment>
<comment type="similarity">
    <text evidence="2">Belongs to the nematode receptor-like protein sre family.</text>
</comment>
<feature type="chain" id="PRO_0000104546" description="Serpentine receptor class epsilon-32">
    <location>
        <begin position="1"/>
        <end position="361"/>
    </location>
</feature>
<feature type="transmembrane region" description="Helical" evidence="1">
    <location>
        <begin position="34"/>
        <end position="54"/>
    </location>
</feature>
<feature type="transmembrane region" description="Helical" evidence="1">
    <location>
        <begin position="66"/>
        <end position="86"/>
    </location>
</feature>
<feature type="transmembrane region" description="Helical" evidence="1">
    <location>
        <begin position="124"/>
        <end position="144"/>
    </location>
</feature>
<feature type="transmembrane region" description="Helical" evidence="1">
    <location>
        <begin position="168"/>
        <end position="188"/>
    </location>
</feature>
<feature type="transmembrane region" description="Helical" evidence="1">
    <location>
        <begin position="195"/>
        <end position="215"/>
    </location>
</feature>
<feature type="transmembrane region" description="Helical" evidence="1">
    <location>
        <begin position="256"/>
        <end position="276"/>
    </location>
</feature>
<feature type="transmembrane region" description="Helical" evidence="1">
    <location>
        <begin position="286"/>
        <end position="306"/>
    </location>
</feature>
<gene>
    <name type="primary">sre-32</name>
    <name type="ORF">W05H5.7</name>
</gene>
<reference key="1">
    <citation type="journal article" date="1998" name="Science">
        <title>Genome sequence of the nematode C. elegans: a platform for investigating biology.</title>
        <authorList>
            <consortium name="The C. elegans sequencing consortium"/>
        </authorList>
    </citation>
    <scope>NUCLEOTIDE SEQUENCE [LARGE SCALE GENOMIC DNA]</scope>
    <source>
        <strain>Bristol N2</strain>
    </source>
</reference>
<proteinExistence type="inferred from homology"/>